<reference key="1">
    <citation type="journal article" date="2011" name="J. Bacteriol.">
        <title>Comparative genomics of 28 Salmonella enterica isolates: evidence for CRISPR-mediated adaptive sublineage evolution.</title>
        <authorList>
            <person name="Fricke W.F."/>
            <person name="Mammel M.K."/>
            <person name="McDermott P.F."/>
            <person name="Tartera C."/>
            <person name="White D.G."/>
            <person name="Leclerc J.E."/>
            <person name="Ravel J."/>
            <person name="Cebula T.A."/>
        </authorList>
    </citation>
    <scope>NUCLEOTIDE SEQUENCE [LARGE SCALE GENOMIC DNA]</scope>
    <source>
        <strain>CT_02021853</strain>
    </source>
</reference>
<accession>B5FQ61</accession>
<proteinExistence type="inferred from homology"/>
<feature type="chain" id="PRO_1000091900" description="3-deoxy-manno-octulosonate cytidylyltransferase">
    <location>
        <begin position="1"/>
        <end position="248"/>
    </location>
</feature>
<keyword id="KW-0963">Cytoplasm</keyword>
<keyword id="KW-0448">Lipopolysaccharide biosynthesis</keyword>
<keyword id="KW-0548">Nucleotidyltransferase</keyword>
<keyword id="KW-0808">Transferase</keyword>
<dbReference type="EC" id="2.7.7.38" evidence="1"/>
<dbReference type="EMBL" id="CP001144">
    <property type="protein sequence ID" value="ACH76571.1"/>
    <property type="molecule type" value="Genomic_DNA"/>
</dbReference>
<dbReference type="RefSeq" id="WP_000011585.1">
    <property type="nucleotide sequence ID" value="NC_011205.1"/>
</dbReference>
<dbReference type="SMR" id="B5FQ61"/>
<dbReference type="KEGG" id="sed:SeD_A1053"/>
<dbReference type="HOGENOM" id="CLU_065038_1_0_6"/>
<dbReference type="UniPathway" id="UPA00030"/>
<dbReference type="UniPathway" id="UPA00358">
    <property type="reaction ID" value="UER00476"/>
</dbReference>
<dbReference type="Proteomes" id="UP000008322">
    <property type="component" value="Chromosome"/>
</dbReference>
<dbReference type="GO" id="GO:0005829">
    <property type="term" value="C:cytosol"/>
    <property type="evidence" value="ECO:0007669"/>
    <property type="project" value="TreeGrafter"/>
</dbReference>
<dbReference type="GO" id="GO:0008690">
    <property type="term" value="F:3-deoxy-manno-octulosonate cytidylyltransferase activity"/>
    <property type="evidence" value="ECO:0007669"/>
    <property type="project" value="UniProtKB-UniRule"/>
</dbReference>
<dbReference type="GO" id="GO:0033468">
    <property type="term" value="P:CMP-keto-3-deoxy-D-manno-octulosonic acid biosynthetic process"/>
    <property type="evidence" value="ECO:0007669"/>
    <property type="project" value="UniProtKB-UniRule"/>
</dbReference>
<dbReference type="GO" id="GO:0009103">
    <property type="term" value="P:lipopolysaccharide biosynthetic process"/>
    <property type="evidence" value="ECO:0007669"/>
    <property type="project" value="UniProtKB-UniRule"/>
</dbReference>
<dbReference type="CDD" id="cd02517">
    <property type="entry name" value="CMP-KDO-Synthetase"/>
    <property type="match status" value="1"/>
</dbReference>
<dbReference type="FunFam" id="3.90.550.10:FF:000011">
    <property type="entry name" value="3-deoxy-manno-octulosonate cytidylyltransferase"/>
    <property type="match status" value="1"/>
</dbReference>
<dbReference type="Gene3D" id="3.90.550.10">
    <property type="entry name" value="Spore Coat Polysaccharide Biosynthesis Protein SpsA, Chain A"/>
    <property type="match status" value="1"/>
</dbReference>
<dbReference type="HAMAP" id="MF_00057">
    <property type="entry name" value="KdsB"/>
    <property type="match status" value="1"/>
</dbReference>
<dbReference type="InterPro" id="IPR003329">
    <property type="entry name" value="Cytidylyl_trans"/>
</dbReference>
<dbReference type="InterPro" id="IPR004528">
    <property type="entry name" value="KdsB"/>
</dbReference>
<dbReference type="InterPro" id="IPR029044">
    <property type="entry name" value="Nucleotide-diphossugar_trans"/>
</dbReference>
<dbReference type="NCBIfam" id="TIGR00466">
    <property type="entry name" value="kdsB"/>
    <property type="match status" value="1"/>
</dbReference>
<dbReference type="NCBIfam" id="NF003950">
    <property type="entry name" value="PRK05450.1-3"/>
    <property type="match status" value="1"/>
</dbReference>
<dbReference type="NCBIfam" id="NF003952">
    <property type="entry name" value="PRK05450.1-5"/>
    <property type="match status" value="1"/>
</dbReference>
<dbReference type="NCBIfam" id="NF009905">
    <property type="entry name" value="PRK13368.1"/>
    <property type="match status" value="1"/>
</dbReference>
<dbReference type="PANTHER" id="PTHR42866">
    <property type="entry name" value="3-DEOXY-MANNO-OCTULOSONATE CYTIDYLYLTRANSFERASE"/>
    <property type="match status" value="1"/>
</dbReference>
<dbReference type="PANTHER" id="PTHR42866:SF2">
    <property type="entry name" value="3-DEOXY-MANNO-OCTULOSONATE CYTIDYLYLTRANSFERASE, MITOCHONDRIAL"/>
    <property type="match status" value="1"/>
</dbReference>
<dbReference type="Pfam" id="PF02348">
    <property type="entry name" value="CTP_transf_3"/>
    <property type="match status" value="1"/>
</dbReference>
<dbReference type="SUPFAM" id="SSF53448">
    <property type="entry name" value="Nucleotide-diphospho-sugar transferases"/>
    <property type="match status" value="1"/>
</dbReference>
<organism>
    <name type="scientific">Salmonella dublin (strain CT_02021853)</name>
    <dbReference type="NCBI Taxonomy" id="439851"/>
    <lineage>
        <taxon>Bacteria</taxon>
        <taxon>Pseudomonadati</taxon>
        <taxon>Pseudomonadota</taxon>
        <taxon>Gammaproteobacteria</taxon>
        <taxon>Enterobacterales</taxon>
        <taxon>Enterobacteriaceae</taxon>
        <taxon>Salmonella</taxon>
    </lineage>
</organism>
<gene>
    <name evidence="1" type="primary">kdsB</name>
    <name type="ordered locus">SeD_A1053</name>
</gene>
<name>KDSB_SALDC</name>
<comment type="function">
    <text evidence="1">Activates KDO (a required 8-carbon sugar) for incorporation into bacterial lipopolysaccharide in Gram-negative bacteria.</text>
</comment>
<comment type="catalytic activity">
    <reaction evidence="1">
        <text>3-deoxy-alpha-D-manno-oct-2-ulosonate + CTP = CMP-3-deoxy-beta-D-manno-octulosonate + diphosphate</text>
        <dbReference type="Rhea" id="RHEA:23448"/>
        <dbReference type="ChEBI" id="CHEBI:33019"/>
        <dbReference type="ChEBI" id="CHEBI:37563"/>
        <dbReference type="ChEBI" id="CHEBI:85986"/>
        <dbReference type="ChEBI" id="CHEBI:85987"/>
        <dbReference type="EC" id="2.7.7.38"/>
    </reaction>
</comment>
<comment type="pathway">
    <text evidence="1">Nucleotide-sugar biosynthesis; CMP-3-deoxy-D-manno-octulosonate biosynthesis; CMP-3-deoxy-D-manno-octulosonate from 3-deoxy-D-manno-octulosonate and CTP: step 1/1.</text>
</comment>
<comment type="pathway">
    <text evidence="1">Bacterial outer membrane biogenesis; lipopolysaccharide biosynthesis.</text>
</comment>
<comment type="subcellular location">
    <subcellularLocation>
        <location evidence="1">Cytoplasm</location>
    </subcellularLocation>
</comment>
<comment type="similarity">
    <text evidence="1">Belongs to the KdsB family.</text>
</comment>
<sequence>MSFVVIIPARFSSTRLPGKPLVDINGKPMIVHVLERVRESGAERIIVATDHEDVARAVEAAGGEVCMTRADHQSGTERLAEVVEKCGFSDDTVIVNVQGDEPMIPAVIIRQVAENLAQRQVGMATLAVPIHSAEEAFNPNAVKVVLDAEGYALYFSRATIPWDRDRFAKSLETVGDTCLRHLGIYGYRAGFIRRYVSWQPSPLEHIEMLEQLRVLWYGEKIHVAIAKAVPGTGVDTADDLERVRAEMR</sequence>
<evidence type="ECO:0000255" key="1">
    <source>
        <dbReference type="HAMAP-Rule" id="MF_00057"/>
    </source>
</evidence>
<protein>
    <recommendedName>
        <fullName evidence="1">3-deoxy-manno-octulosonate cytidylyltransferase</fullName>
        <ecNumber evidence="1">2.7.7.38</ecNumber>
    </recommendedName>
    <alternativeName>
        <fullName evidence="1">CMP-2-keto-3-deoxyoctulosonic acid synthase</fullName>
        <shortName evidence="1">CKS</shortName>
        <shortName evidence="1">CMP-KDO synthase</shortName>
    </alternativeName>
</protein>